<accession>Q0GYU4</accession>
<organism>
    <name type="scientific">Hypocrea jecorina</name>
    <name type="common">Trichoderma reesei</name>
    <dbReference type="NCBI Taxonomy" id="51453"/>
    <lineage>
        <taxon>Eukaryota</taxon>
        <taxon>Fungi</taxon>
        <taxon>Dikarya</taxon>
        <taxon>Ascomycota</taxon>
        <taxon>Pezizomycotina</taxon>
        <taxon>Sordariomycetes</taxon>
        <taxon>Hypocreomycetidae</taxon>
        <taxon>Hypocreales</taxon>
        <taxon>Hypocreaceae</taxon>
        <taxon>Trichoderma</taxon>
    </lineage>
</organism>
<name>GLD2_HYPJE</name>
<protein>
    <recommendedName>
        <fullName>Glycerol 2-dehydrogenase (NADP(+))</fullName>
        <ecNumber>1.1.1.156</ecNumber>
    </recommendedName>
</protein>
<sequence>MASKTYTLNTGAKIPAVGFGTFANEGAKGETYAAVTKALDVGYRHLDCAWFYHNEDEVGDAVRDFLARRPDVKREDLFICTKVWNHLHEPEDVKWSAKNSCENLKVDYIDLFLVHWPIAAEKNSDRSVKLGPDGKYVINQALTENPEPTWRAMEELVESGLVKAIGVSNWTIPGLKKLLQIAKIKPAVNQIEIHPFLPNEELVAFCFENGILPEAYSPLGSQNQVPSTGERVRDNPTLKAVAERSGYSLAQILLAWGLKRGYVVLPKSSTPSRIESNFNIPELSDEDFEAIQQVAKGRHTRFVNMKDTFGYNVWPEEE</sequence>
<evidence type="ECO:0000250" key="1"/>
<evidence type="ECO:0000269" key="2">
    <source>
    </source>
</evidence>
<evidence type="ECO:0000305" key="3"/>
<keyword id="KW-0319">Glycerol metabolism</keyword>
<keyword id="KW-0521">NADP</keyword>
<keyword id="KW-0560">Oxidoreductase</keyword>
<comment type="function">
    <text evidence="2">Glycerol oxidoreductase probably involved in glycerol synthesis.</text>
</comment>
<comment type="catalytic activity">
    <reaction evidence="2">
        <text>glycerol + NADP(+) = dihydroxyacetone + NADPH + H(+)</text>
        <dbReference type="Rhea" id="RHEA:12753"/>
        <dbReference type="ChEBI" id="CHEBI:15378"/>
        <dbReference type="ChEBI" id="CHEBI:16016"/>
        <dbReference type="ChEBI" id="CHEBI:17754"/>
        <dbReference type="ChEBI" id="CHEBI:57783"/>
        <dbReference type="ChEBI" id="CHEBI:58349"/>
        <dbReference type="EC" id="1.1.1.156"/>
    </reaction>
</comment>
<comment type="biophysicochemical properties">
    <kinetics>
        <KM evidence="2">1 mM for dihydroxyacetone (in the reductive reaction)</KM>
        <KM evidence="2">50 mM for NADPH (in the reductive reaction)</KM>
        <KM evidence="2">350 mM for glycerol (in the oxidative reaction)</KM>
        <KM evidence="2">110 mM for NADP (in the oxidative reaction)</KM>
        <KM evidence="2">96 mM for D-glyceraldehyde</KM>
        <KM evidence="2">8 mM for L-glyceraldehyde</KM>
        <KM evidence="2">13 mM for diacetyl</KM>
        <KM evidence="2">30 mM for glyoxal</KM>
        <KM evidence="2">37500 mM for methylglyoxal</KM>
        <KM evidence="2">113 mM for acetoin</KM>
    </kinetics>
</comment>
<comment type="similarity">
    <text evidence="3">Belongs to the aldo/keto reductase family.</text>
</comment>
<feature type="chain" id="PRO_0000424285" description="Glycerol 2-dehydrogenase (NADP(+))">
    <location>
        <begin position="1"/>
        <end position="318"/>
    </location>
</feature>
<feature type="active site" description="Proton donor" evidence="1">
    <location>
        <position position="52"/>
    </location>
</feature>
<feature type="binding site" evidence="1">
    <location>
        <position position="115"/>
    </location>
    <ligand>
        <name>substrate</name>
    </ligand>
</feature>
<feature type="binding site" evidence="1">
    <location>
        <begin position="217"/>
        <end position="277"/>
    </location>
    <ligand>
        <name>NADP(+)</name>
        <dbReference type="ChEBI" id="CHEBI:58349"/>
    </ligand>
</feature>
<gene>
    <name type="primary">gld2</name>
</gene>
<dbReference type="EC" id="1.1.1.156"/>
<dbReference type="EMBL" id="DQ422038">
    <property type="protein sequence ID" value="ABD83953.1"/>
    <property type="molecule type" value="Genomic_DNA"/>
</dbReference>
<dbReference type="SMR" id="Q0GYU4"/>
<dbReference type="VEuPathDB" id="FungiDB:TrQ_007971"/>
<dbReference type="OMA" id="ACATNQV"/>
<dbReference type="BRENDA" id="1.1.1.156">
    <property type="organism ID" value="6451"/>
</dbReference>
<dbReference type="SABIO-RK" id="Q0GYU4"/>
<dbReference type="GO" id="GO:0047953">
    <property type="term" value="F:glycerol 2-dehydrogenase (NADP+) activity"/>
    <property type="evidence" value="ECO:0007669"/>
    <property type="project" value="UniProtKB-EC"/>
</dbReference>
<dbReference type="GO" id="GO:0006071">
    <property type="term" value="P:glycerol metabolic process"/>
    <property type="evidence" value="ECO:0007669"/>
    <property type="project" value="UniProtKB-KW"/>
</dbReference>
<dbReference type="FunFam" id="3.20.20.100:FF:000025">
    <property type="entry name" value="NADP(+)-dependent glycerol dehydrogenase"/>
    <property type="match status" value="1"/>
</dbReference>
<dbReference type="Gene3D" id="3.20.20.100">
    <property type="entry name" value="NADP-dependent oxidoreductase domain"/>
    <property type="match status" value="1"/>
</dbReference>
<dbReference type="InterPro" id="IPR020471">
    <property type="entry name" value="AKR"/>
</dbReference>
<dbReference type="InterPro" id="IPR018170">
    <property type="entry name" value="Aldo/ket_reductase_CS"/>
</dbReference>
<dbReference type="InterPro" id="IPR023210">
    <property type="entry name" value="NADP_OxRdtase_dom"/>
</dbReference>
<dbReference type="InterPro" id="IPR036812">
    <property type="entry name" value="NADP_OxRdtase_dom_sf"/>
</dbReference>
<dbReference type="PANTHER" id="PTHR11732">
    <property type="entry name" value="ALDO/KETO REDUCTASE"/>
    <property type="match status" value="1"/>
</dbReference>
<dbReference type="Pfam" id="PF00248">
    <property type="entry name" value="Aldo_ket_red"/>
    <property type="match status" value="1"/>
</dbReference>
<dbReference type="PIRSF" id="PIRSF000097">
    <property type="entry name" value="AKR"/>
    <property type="match status" value="1"/>
</dbReference>
<dbReference type="PRINTS" id="PR00069">
    <property type="entry name" value="ALDKETRDTASE"/>
</dbReference>
<dbReference type="SUPFAM" id="SSF51430">
    <property type="entry name" value="NAD(P)-linked oxidoreductase"/>
    <property type="match status" value="1"/>
</dbReference>
<dbReference type="PROSITE" id="PS00798">
    <property type="entry name" value="ALDOKETO_REDUCTASE_1"/>
    <property type="match status" value="1"/>
</dbReference>
<dbReference type="PROSITE" id="PS00063">
    <property type="entry name" value="ALDOKETO_REDUCTASE_3"/>
    <property type="match status" value="1"/>
</dbReference>
<proteinExistence type="evidence at protein level"/>
<reference key="1">
    <citation type="journal article" date="2006" name="FEBS J.">
        <title>Enzymes for the NADPH-dependent reduction of dihydroxyacetone and D-glyceraldehyde and L-glyceraldehyde in the mould Hypocrea jecorina.</title>
        <authorList>
            <person name="Liepins J."/>
            <person name="Kuorelahti S."/>
            <person name="Penttila M."/>
            <person name="Richard P."/>
        </authorList>
    </citation>
    <scope>NUCLEOTIDE SEQUENCE [GENOMIC DNA]</scope>
    <scope>FUNCTION</scope>
    <scope>CATALYTIC ACTIVITY</scope>
    <scope>BIOPHYSICOCHEMICAL PROPERTIES</scope>
</reference>